<gene>
    <name type="primary">M2-1</name>
</gene>
<feature type="chain" id="PRO_0000365792" description="Protein M2-1">
    <location>
        <begin position="1"/>
        <end position="176"/>
    </location>
</feature>
<feature type="zinc finger region" description="C3H1-type" evidence="1 2">
    <location>
        <begin position="1"/>
        <end position="27"/>
    </location>
</feature>
<feature type="region of interest" description="Oligomerization" evidence="1">
    <location>
        <begin position="31"/>
        <end position="48"/>
    </location>
</feature>
<feature type="region of interest" description="Globular core" evidence="1">
    <location>
        <begin position="75"/>
        <end position="169"/>
    </location>
</feature>
<feature type="region of interest" description="Binding to the phosphoprotein" evidence="1">
    <location>
        <begin position="125"/>
        <end position="161"/>
    </location>
</feature>
<feature type="site" description="Involved in RNA-binding" evidence="1">
    <location>
        <position position="7"/>
    </location>
</feature>
<feature type="site" description="Involved in RNA-binding" evidence="1">
    <location>
        <position position="8"/>
    </location>
</feature>
<feature type="site" description="Involved in RNA-binding" evidence="1">
    <location>
        <position position="91"/>
    </location>
</feature>
<feature type="site" description="Involved in RNA-binding" evidence="1">
    <location>
        <position position="149"/>
    </location>
</feature>
<feature type="modified residue" description="Phosphoserine; by host" evidence="1">
    <location>
        <position position="57"/>
    </location>
</feature>
<feature type="modified residue" description="Phosphoserine; by host" evidence="1">
    <location>
        <position position="60"/>
    </location>
</feature>
<accession>Q5MKM1</accession>
<accession>Q50EW4</accession>
<keyword id="KW-1035">Host cytoplasm</keyword>
<keyword id="KW-1048">Host nucleus</keyword>
<keyword id="KW-0479">Metal-binding</keyword>
<keyword id="KW-0597">Phosphoprotein</keyword>
<keyword id="KW-1185">Reference proteome</keyword>
<keyword id="KW-0694">RNA-binding</keyword>
<keyword id="KW-0804">Transcription</keyword>
<keyword id="KW-0889">Transcription antitermination</keyword>
<keyword id="KW-0805">Transcription regulation</keyword>
<keyword id="KW-1195">Viral transcription</keyword>
<keyword id="KW-0946">Virion</keyword>
<keyword id="KW-0862">Zinc</keyword>
<keyword id="KW-0863">Zinc-finger</keyword>
<reference key="1">
    <citation type="journal article" date="2005" name="J. Gen. Virol.">
        <title>Genome sequence of the non-pathogenic strain 15 of pneumonia virus of mice and comparison with the genome of the pathogenic strain J3666.</title>
        <authorList>
            <person name="Thorpe L.C."/>
            <person name="Easton A.J."/>
        </authorList>
    </citation>
    <scope>NUCLEOTIDE SEQUENCE [GENOMIC RNA]</scope>
    <source>
        <strain>15</strain>
    </source>
</reference>
<reference key="2">
    <citation type="journal article" date="2005" name="Virus Genes">
        <title>Complete sequence of the RNA genome of pneumonia virus of mice (PVM).</title>
        <authorList>
            <person name="Krempl C.D."/>
            <person name="Lamirande E.W."/>
            <person name="Collins P.L."/>
        </authorList>
    </citation>
    <scope>NUCLEOTIDE SEQUENCE [GENOMIC RNA]</scope>
    <source>
        <strain>15</strain>
    </source>
</reference>
<organism>
    <name type="scientific">Murine pneumonia virus (strain 15)</name>
    <name type="common">MPV</name>
    <dbReference type="NCBI Taxonomy" id="296738"/>
    <lineage>
        <taxon>Viruses</taxon>
        <taxon>Riboviria</taxon>
        <taxon>Orthornavirae</taxon>
        <taxon>Negarnaviricota</taxon>
        <taxon>Haploviricotina</taxon>
        <taxon>Monjiviricetes</taxon>
        <taxon>Mononegavirales</taxon>
        <taxon>Pneumoviridae</taxon>
        <taxon>Orthopneumovirus</taxon>
        <taxon>Orthopneumovirus muris</taxon>
        <taxon>murine pneumonia virus</taxon>
    </lineage>
</organism>
<comment type="function">
    <text evidence="1">Acts as a tetrameric transcription processivity factor that binds in a competitive manner to RNA and the phosphoprotein (P) to prevent premature termination during transcription. Transcription anti-terminator that enhances readthrough of intergenic junctions during viral transcription. Preferentially binds to poly(A)-rich sequences. Plays a role in the association of the matrix protein with the nucleocapsid, which initiates assembly and budding.</text>
</comment>
<comment type="subunit">
    <text evidence="1">Homotetramer. The homotetramer interacts with RNA. Interacts with the phosphoprotein (P); this interaction is required for protein M2-1 function, localization in host inclusion bodies. Formation of a complex host PP1/M2-1/P allows P to target host PP1 phosphatase to the M2-1 substrate. Interacts with the nucleoprotein (N). Interacts with the matrix protein (M); this interaction directs M localization to cytoplasmic inclusions comprising viral proteins L, N, P, and M2-1 and mediates M association with the nucleocapsid. Interacts with host PABPC1 (via C-terminus).</text>
</comment>
<comment type="subcellular location">
    <subcellularLocation>
        <location evidence="1">Virion</location>
    </subcellularLocation>
    <subcellularLocation>
        <location evidence="1">Host cytoplasm</location>
    </subcellularLocation>
    <subcellularLocation>
        <location evidence="1">Host nucleus</location>
    </subcellularLocation>
    <text evidence="1">Localizes in cytoplasmic inclusion bodies substructures called inclusion bodies associated granules (IBAGs). Forms a layer between the matrix and nucleocapsid.</text>
</comment>
<comment type="domain">
    <text evidence="1">Contains a zinc-finger domain on its N-terminus essential for its anti-termination function. Contains an oligomerization domain. The central globular core is responsible for binding to RNA and phosphoprotein.</text>
</comment>
<comment type="PTM">
    <text evidence="1">Phosphorylated by host in infected cells. Only dephosphorylated M2-1 is competent for viral mRNA binding. Cyclic turnover of phosphorylation-dephosphorylation of M2-1 is required for efficient viral transcription.</text>
</comment>
<comment type="similarity">
    <text evidence="3">Belongs to the pneumoviridae M2-1 protein family.</text>
</comment>
<proteinExistence type="inferred from homology"/>
<organismHost>
    <name type="scientific">Mus musculus</name>
    <name type="common">Mouse</name>
    <dbReference type="NCBI Taxonomy" id="10090"/>
</organismHost>
<evidence type="ECO:0000250" key="1">
    <source>
        <dbReference type="UniProtKB" id="P04545"/>
    </source>
</evidence>
<evidence type="ECO:0000255" key="2">
    <source>
        <dbReference type="PROSITE-ProRule" id="PRU00723"/>
    </source>
</evidence>
<evidence type="ECO:0000305" key="3"/>
<dbReference type="EMBL" id="AY743910">
    <property type="protein sequence ID" value="AAW02841.1"/>
    <property type="molecule type" value="Genomic_RNA"/>
</dbReference>
<dbReference type="EMBL" id="AY729016">
    <property type="protein sequence ID" value="AAW79182.1"/>
    <property type="molecule type" value="Genomic_RNA"/>
</dbReference>
<dbReference type="SMR" id="Q5MKM1"/>
<dbReference type="Proteomes" id="UP000133604">
    <property type="component" value="Genome"/>
</dbReference>
<dbReference type="Proteomes" id="UP000147186">
    <property type="component" value="Segment"/>
</dbReference>
<dbReference type="GO" id="GO:0030430">
    <property type="term" value="C:host cell cytoplasm"/>
    <property type="evidence" value="ECO:0007669"/>
    <property type="project" value="UniProtKB-SubCell"/>
</dbReference>
<dbReference type="GO" id="GO:0042025">
    <property type="term" value="C:host cell nucleus"/>
    <property type="evidence" value="ECO:0007669"/>
    <property type="project" value="UniProtKB-SubCell"/>
</dbReference>
<dbReference type="GO" id="GO:0044423">
    <property type="term" value="C:virion component"/>
    <property type="evidence" value="ECO:0007669"/>
    <property type="project" value="UniProtKB-KW"/>
</dbReference>
<dbReference type="GO" id="GO:0003723">
    <property type="term" value="F:RNA binding"/>
    <property type="evidence" value="ECO:0007669"/>
    <property type="project" value="UniProtKB-KW"/>
</dbReference>
<dbReference type="GO" id="GO:0005198">
    <property type="term" value="F:structural molecule activity"/>
    <property type="evidence" value="ECO:0007669"/>
    <property type="project" value="InterPro"/>
</dbReference>
<dbReference type="GO" id="GO:0008270">
    <property type="term" value="F:zinc ion binding"/>
    <property type="evidence" value="ECO:0007669"/>
    <property type="project" value="UniProtKB-KW"/>
</dbReference>
<dbReference type="GO" id="GO:0046782">
    <property type="term" value="P:regulation of viral transcription"/>
    <property type="evidence" value="ECO:0007669"/>
    <property type="project" value="InterPro"/>
</dbReference>
<dbReference type="GO" id="GO:0031564">
    <property type="term" value="P:transcription antitermination"/>
    <property type="evidence" value="ECO:0007669"/>
    <property type="project" value="UniProtKB-KW"/>
</dbReference>
<dbReference type="GO" id="GO:0019083">
    <property type="term" value="P:viral transcription"/>
    <property type="evidence" value="ECO:0007669"/>
    <property type="project" value="UniProtKB-KW"/>
</dbReference>
<dbReference type="Gene3D" id="1.20.120.1350">
    <property type="entry name" value="Pneumovirus matrix protein 2 (M2), zinc-binding domain"/>
    <property type="match status" value="1"/>
</dbReference>
<dbReference type="InterPro" id="IPR009452">
    <property type="entry name" value="Pneumovirus_M2-1"/>
</dbReference>
<dbReference type="InterPro" id="IPR000571">
    <property type="entry name" value="Znf_CCCH"/>
</dbReference>
<dbReference type="InterPro" id="IPR036855">
    <property type="entry name" value="Znf_CCCH_sf"/>
</dbReference>
<dbReference type="Pfam" id="PF06436">
    <property type="entry name" value="Pneumovirus_M2"/>
    <property type="match status" value="1"/>
</dbReference>
<dbReference type="PIRSF" id="PIRSF003913">
    <property type="entry name" value="Matrix_glycop-M2_paramyxo"/>
    <property type="match status" value="1"/>
</dbReference>
<dbReference type="SUPFAM" id="SSF90229">
    <property type="entry name" value="CCCH zinc finger"/>
    <property type="match status" value="1"/>
</dbReference>
<dbReference type="PROSITE" id="PS50103">
    <property type="entry name" value="ZF_C3H1"/>
    <property type="match status" value="1"/>
</dbReference>
<sequence length="176" mass="20204">MSVRPCKFEVQGFCSRGRNCKYSHKYWEWPLKTLMLRQNYMLNRIYRFLDTNTDAMSDVSGFDAPQRTAEYALGTIGVLKSYLEKTNNITKSIACGSLITVLQNLDVGLVIQARDSNTEDTNYLRSCNTILSYIDKIHKKRQIIHILKRLPVGVLCNLIQSVISIEEKINSSMKTE</sequence>
<protein>
    <recommendedName>
        <fullName>Protein M2-1</fullName>
    </recommendedName>
    <alternativeName>
        <fullName>Envelope-associated 22 kDa protein</fullName>
    </alternativeName>
    <alternativeName>
        <fullName>Transcription antitermination factor M2-1</fullName>
    </alternativeName>
</protein>
<name>M21_MPV15</name>